<evidence type="ECO:0000255" key="1">
    <source>
        <dbReference type="HAMAP-Rule" id="MF_01819"/>
    </source>
</evidence>
<name>SLYA_SALTI</name>
<dbReference type="EMBL" id="AB010777">
    <property type="protein sequence ID" value="BAA24582.1"/>
    <property type="molecule type" value="Genomic_DNA"/>
</dbReference>
<dbReference type="EMBL" id="AL513382">
    <property type="protein sequence ID" value="CAD01923.1"/>
    <property type="molecule type" value="Genomic_DNA"/>
</dbReference>
<dbReference type="EMBL" id="AE014613">
    <property type="protein sequence ID" value="AAO68962.1"/>
    <property type="molecule type" value="Genomic_DNA"/>
</dbReference>
<dbReference type="PIR" id="AB0694">
    <property type="entry name" value="AB0694"/>
</dbReference>
<dbReference type="RefSeq" id="NP_456086.1">
    <property type="nucleotide sequence ID" value="NC_003198.1"/>
</dbReference>
<dbReference type="SMR" id="P61091"/>
<dbReference type="STRING" id="220341.gene:17585613"/>
<dbReference type="KEGG" id="stt:t1312"/>
<dbReference type="KEGG" id="sty:STY1678"/>
<dbReference type="PATRIC" id="fig|220341.7.peg.1688"/>
<dbReference type="eggNOG" id="COG1846">
    <property type="taxonomic scope" value="Bacteria"/>
</dbReference>
<dbReference type="HOGENOM" id="CLU_083287_18_2_6"/>
<dbReference type="OMA" id="DEHRFGM"/>
<dbReference type="OrthoDB" id="5296557at2"/>
<dbReference type="Proteomes" id="UP000000541">
    <property type="component" value="Chromosome"/>
</dbReference>
<dbReference type="Proteomes" id="UP000002670">
    <property type="component" value="Chromosome"/>
</dbReference>
<dbReference type="GO" id="GO:0003677">
    <property type="term" value="F:DNA binding"/>
    <property type="evidence" value="ECO:0007669"/>
    <property type="project" value="UniProtKB-UniRule"/>
</dbReference>
<dbReference type="GO" id="GO:0003700">
    <property type="term" value="F:DNA-binding transcription factor activity"/>
    <property type="evidence" value="ECO:0007669"/>
    <property type="project" value="UniProtKB-UniRule"/>
</dbReference>
<dbReference type="GO" id="GO:0006950">
    <property type="term" value="P:response to stress"/>
    <property type="evidence" value="ECO:0007669"/>
    <property type="project" value="TreeGrafter"/>
</dbReference>
<dbReference type="FunFam" id="1.10.10.10:FF:000261">
    <property type="entry name" value="Transcriptional regulator SlyA"/>
    <property type="match status" value="1"/>
</dbReference>
<dbReference type="Gene3D" id="1.10.10.10">
    <property type="entry name" value="Winged helix-like DNA-binding domain superfamily/Winged helix DNA-binding domain"/>
    <property type="match status" value="1"/>
</dbReference>
<dbReference type="HAMAP" id="MF_01819">
    <property type="entry name" value="HTH_type_SlyA"/>
    <property type="match status" value="1"/>
</dbReference>
<dbReference type="InterPro" id="IPR000835">
    <property type="entry name" value="HTH_MarR-typ"/>
</dbReference>
<dbReference type="InterPro" id="IPR039422">
    <property type="entry name" value="MarR/SlyA-like"/>
</dbReference>
<dbReference type="InterPro" id="IPR023187">
    <property type="entry name" value="Tscrpt_reg_MarR-type_CS"/>
</dbReference>
<dbReference type="InterPro" id="IPR023071">
    <property type="entry name" value="Tscrpt_reg_SlyA"/>
</dbReference>
<dbReference type="InterPro" id="IPR036388">
    <property type="entry name" value="WH-like_DNA-bd_sf"/>
</dbReference>
<dbReference type="InterPro" id="IPR036390">
    <property type="entry name" value="WH_DNA-bd_sf"/>
</dbReference>
<dbReference type="NCBIfam" id="NF002926">
    <property type="entry name" value="PRK03573.1"/>
    <property type="match status" value="1"/>
</dbReference>
<dbReference type="PANTHER" id="PTHR33164:SF64">
    <property type="entry name" value="TRANSCRIPTIONAL REGULATOR SLYA"/>
    <property type="match status" value="1"/>
</dbReference>
<dbReference type="PANTHER" id="PTHR33164">
    <property type="entry name" value="TRANSCRIPTIONAL REGULATOR, MARR FAMILY"/>
    <property type="match status" value="1"/>
</dbReference>
<dbReference type="Pfam" id="PF01047">
    <property type="entry name" value="MarR"/>
    <property type="match status" value="1"/>
</dbReference>
<dbReference type="PRINTS" id="PR00598">
    <property type="entry name" value="HTHMARR"/>
</dbReference>
<dbReference type="SMART" id="SM00347">
    <property type="entry name" value="HTH_MARR"/>
    <property type="match status" value="1"/>
</dbReference>
<dbReference type="SUPFAM" id="SSF46785">
    <property type="entry name" value="Winged helix' DNA-binding domain"/>
    <property type="match status" value="1"/>
</dbReference>
<dbReference type="PROSITE" id="PS01117">
    <property type="entry name" value="HTH_MARR_1"/>
    <property type="match status" value="1"/>
</dbReference>
<dbReference type="PROSITE" id="PS50995">
    <property type="entry name" value="HTH_MARR_2"/>
    <property type="match status" value="1"/>
</dbReference>
<keyword id="KW-0010">Activator</keyword>
<keyword id="KW-0238">DNA-binding</keyword>
<keyword id="KW-0678">Repressor</keyword>
<keyword id="KW-0804">Transcription</keyword>
<keyword id="KW-0805">Transcription regulation</keyword>
<keyword id="KW-0843">Virulence</keyword>
<protein>
    <recommendedName>
        <fullName evidence="1">Transcriptional regulator SlyA</fullName>
    </recommendedName>
</protein>
<gene>
    <name evidence="1" type="primary">slyA</name>
    <name type="ordered locus">STY3045</name>
    <name type="ordered locus">t1312</name>
</gene>
<feature type="chain" id="PRO_0000054392" description="Transcriptional regulator SlyA">
    <location>
        <begin position="1"/>
        <end position="144"/>
    </location>
</feature>
<feature type="domain" description="HTH marR-type" evidence="1">
    <location>
        <begin position="2"/>
        <end position="135"/>
    </location>
</feature>
<feature type="DNA-binding region" description="H-T-H motif" evidence="1">
    <location>
        <begin position="49"/>
        <end position="72"/>
    </location>
</feature>
<proteinExistence type="inferred from homology"/>
<reference key="1">
    <citation type="journal article" date="1999" name="Microbiol. Immunol.">
        <title>TTG as the initiation codon of Salmonella slyA, a gene required for survival within macrophages.</title>
        <authorList>
            <person name="Kawakami T."/>
            <person name="Kaneko A."/>
            <person name="Okada N."/>
            <person name="Imajoh-Ohmi S."/>
            <person name="Nonaka T."/>
            <person name="Matsui H."/>
            <person name="Kawahara K."/>
            <person name="Danbara H."/>
        </authorList>
    </citation>
    <scope>NUCLEOTIDE SEQUENCE [GENOMIC DNA]</scope>
    <source>
        <strain>ATCC 700931 / Ty2</strain>
    </source>
</reference>
<reference key="2">
    <citation type="journal article" date="2001" name="Nature">
        <title>Complete genome sequence of a multiple drug resistant Salmonella enterica serovar Typhi CT18.</title>
        <authorList>
            <person name="Parkhill J."/>
            <person name="Dougan G."/>
            <person name="James K.D."/>
            <person name="Thomson N.R."/>
            <person name="Pickard D."/>
            <person name="Wain J."/>
            <person name="Churcher C.M."/>
            <person name="Mungall K.L."/>
            <person name="Bentley S.D."/>
            <person name="Holden M.T.G."/>
            <person name="Sebaihia M."/>
            <person name="Baker S."/>
            <person name="Basham D."/>
            <person name="Brooks K."/>
            <person name="Chillingworth T."/>
            <person name="Connerton P."/>
            <person name="Cronin A."/>
            <person name="Davis P."/>
            <person name="Davies R.M."/>
            <person name="Dowd L."/>
            <person name="White N."/>
            <person name="Farrar J."/>
            <person name="Feltwell T."/>
            <person name="Hamlin N."/>
            <person name="Haque A."/>
            <person name="Hien T.T."/>
            <person name="Holroyd S."/>
            <person name="Jagels K."/>
            <person name="Krogh A."/>
            <person name="Larsen T.S."/>
            <person name="Leather S."/>
            <person name="Moule S."/>
            <person name="O'Gaora P."/>
            <person name="Parry C."/>
            <person name="Quail M.A."/>
            <person name="Rutherford K.M."/>
            <person name="Simmonds M."/>
            <person name="Skelton J."/>
            <person name="Stevens K."/>
            <person name="Whitehead S."/>
            <person name="Barrell B.G."/>
        </authorList>
    </citation>
    <scope>NUCLEOTIDE SEQUENCE [LARGE SCALE GENOMIC DNA]</scope>
    <source>
        <strain>CT18</strain>
    </source>
</reference>
<reference key="3">
    <citation type="journal article" date="2003" name="J. Bacteriol.">
        <title>Comparative genomics of Salmonella enterica serovar Typhi strains Ty2 and CT18.</title>
        <authorList>
            <person name="Deng W."/>
            <person name="Liou S.-R."/>
            <person name="Plunkett G. III"/>
            <person name="Mayhew G.F."/>
            <person name="Rose D.J."/>
            <person name="Burland V."/>
            <person name="Kodoyianni V."/>
            <person name="Schwartz D.C."/>
            <person name="Blattner F.R."/>
        </authorList>
    </citation>
    <scope>NUCLEOTIDE SEQUENCE [LARGE SCALE GENOMIC DNA]</scope>
    <source>
        <strain>ATCC 700931 / Ty2</strain>
    </source>
</reference>
<sequence length="144" mass="16448">MESPLGSDLARLVRIWRALIDHRLKPLELTQTHWVTLHNIHQLPPDQSQIQLAKAIGIEQPSLVRTLDQLEDKGLISRQTCASDRRAKRIKLTEKAEPLIAEMEEVIHKTRGEILAGISSEEIELLIKLVAKLEHNIMELHSHD</sequence>
<organism>
    <name type="scientific">Salmonella typhi</name>
    <dbReference type="NCBI Taxonomy" id="90370"/>
    <lineage>
        <taxon>Bacteria</taxon>
        <taxon>Pseudomonadati</taxon>
        <taxon>Pseudomonadota</taxon>
        <taxon>Gammaproteobacteria</taxon>
        <taxon>Enterobacterales</taxon>
        <taxon>Enterobacteriaceae</taxon>
        <taxon>Salmonella</taxon>
    </lineage>
</organism>
<comment type="function">
    <text evidence="1">Transcription regulator that can specifically activate or repress expression of target genes.</text>
</comment>
<comment type="subunit">
    <text evidence="1">Homodimer.</text>
</comment>
<comment type="similarity">
    <text evidence="1">Belongs to the SlyA family.</text>
</comment>
<accession>P61091</accession>
<accession>O54521</accession>